<gene>
    <name type="ORF">SPBC1711.16</name>
</gene>
<dbReference type="EMBL" id="CU329671">
    <property type="protein sequence ID" value="CAB88246.1"/>
    <property type="molecule type" value="Genomic_DNA"/>
</dbReference>
<dbReference type="SMR" id="Q9P775"/>
<dbReference type="BioGRID" id="276339">
    <property type="interactions" value="8"/>
</dbReference>
<dbReference type="FunCoup" id="Q9P775">
    <property type="interactions" value="1063"/>
</dbReference>
<dbReference type="STRING" id="284812.Q9P775"/>
<dbReference type="iPTMnet" id="Q9P775"/>
<dbReference type="PaxDb" id="4896-SPBC1711.16.1"/>
<dbReference type="EnsemblFungi" id="SPBC1711.16.1">
    <property type="protein sequence ID" value="SPBC1711.16.1:pep"/>
    <property type="gene ID" value="SPBC1711.16"/>
</dbReference>
<dbReference type="KEGG" id="spo:2539789"/>
<dbReference type="PomBase" id="SPBC1711.16"/>
<dbReference type="VEuPathDB" id="FungiDB:SPBC1711.16"/>
<dbReference type="eggNOG" id="KOG0270">
    <property type="taxonomic scope" value="Eukaryota"/>
</dbReference>
<dbReference type="HOGENOM" id="CLU_023867_0_1_1"/>
<dbReference type="InParanoid" id="Q9P775"/>
<dbReference type="OMA" id="CFVPRGV"/>
<dbReference type="PhylomeDB" id="Q9P775"/>
<dbReference type="PRO" id="PR:Q9P775"/>
<dbReference type="Proteomes" id="UP000002485">
    <property type="component" value="Chromosome II"/>
</dbReference>
<dbReference type="GO" id="GO:0005829">
    <property type="term" value="C:cytosol"/>
    <property type="evidence" value="ECO:0007005"/>
    <property type="project" value="PomBase"/>
</dbReference>
<dbReference type="GO" id="GO:0005730">
    <property type="term" value="C:nucleolus"/>
    <property type="evidence" value="ECO:0007005"/>
    <property type="project" value="PomBase"/>
</dbReference>
<dbReference type="GO" id="GO:0005634">
    <property type="term" value="C:nucleus"/>
    <property type="evidence" value="ECO:0007005"/>
    <property type="project" value="PomBase"/>
</dbReference>
<dbReference type="GO" id="GO:0006364">
    <property type="term" value="P:rRNA processing"/>
    <property type="evidence" value="ECO:0000266"/>
    <property type="project" value="PomBase"/>
</dbReference>
<dbReference type="FunFam" id="2.130.10.10:FF:000457">
    <property type="entry name" value="rRNA processing protein Pwp1"/>
    <property type="match status" value="1"/>
</dbReference>
<dbReference type="Gene3D" id="2.130.10.10">
    <property type="entry name" value="YVTN repeat-like/Quinoprotein amine dehydrogenase"/>
    <property type="match status" value="2"/>
</dbReference>
<dbReference type="InterPro" id="IPR020472">
    <property type="entry name" value="G-protein_beta_WD-40_rep"/>
</dbReference>
<dbReference type="InterPro" id="IPR044285">
    <property type="entry name" value="PWP1"/>
</dbReference>
<dbReference type="InterPro" id="IPR015943">
    <property type="entry name" value="WD40/YVTN_repeat-like_dom_sf"/>
</dbReference>
<dbReference type="InterPro" id="IPR019775">
    <property type="entry name" value="WD40_repeat_CS"/>
</dbReference>
<dbReference type="InterPro" id="IPR036322">
    <property type="entry name" value="WD40_repeat_dom_sf"/>
</dbReference>
<dbReference type="InterPro" id="IPR001680">
    <property type="entry name" value="WD40_rpt"/>
</dbReference>
<dbReference type="PANTHER" id="PTHR14091">
    <property type="entry name" value="PERIODIC TRYPTOPHAN PROTEIN 1"/>
    <property type="match status" value="1"/>
</dbReference>
<dbReference type="PANTHER" id="PTHR14091:SF0">
    <property type="entry name" value="PERIODIC TRYPTOPHAN PROTEIN 1 HOMOLOG"/>
    <property type="match status" value="1"/>
</dbReference>
<dbReference type="Pfam" id="PF00400">
    <property type="entry name" value="WD40"/>
    <property type="match status" value="3"/>
</dbReference>
<dbReference type="PRINTS" id="PR00320">
    <property type="entry name" value="GPROTEINBRPT"/>
</dbReference>
<dbReference type="SMART" id="SM00320">
    <property type="entry name" value="WD40"/>
    <property type="match status" value="5"/>
</dbReference>
<dbReference type="SUPFAM" id="SSF50978">
    <property type="entry name" value="WD40 repeat-like"/>
    <property type="match status" value="1"/>
</dbReference>
<dbReference type="PROSITE" id="PS00678">
    <property type="entry name" value="WD_REPEATS_1"/>
    <property type="match status" value="2"/>
</dbReference>
<dbReference type="PROSITE" id="PS50082">
    <property type="entry name" value="WD_REPEATS_2"/>
    <property type="match status" value="2"/>
</dbReference>
<dbReference type="PROSITE" id="PS50294">
    <property type="entry name" value="WD_REPEATS_REGION"/>
    <property type="match status" value="1"/>
</dbReference>
<evidence type="ECO:0000256" key="1">
    <source>
        <dbReference type="SAM" id="MobiDB-lite"/>
    </source>
</evidence>
<evidence type="ECO:0000269" key="2">
    <source>
    </source>
</evidence>
<evidence type="ECO:0000269" key="3">
    <source>
    </source>
</evidence>
<feature type="chain" id="PRO_0000316549" description="Uncharacterized WD repeat-containing protein C17D11.16">
    <location>
        <begin position="1"/>
        <end position="516"/>
    </location>
</feature>
<feature type="repeat" description="WD 1">
    <location>
        <begin position="182"/>
        <end position="227"/>
    </location>
</feature>
<feature type="repeat" description="WD 2">
    <location>
        <begin position="252"/>
        <end position="292"/>
    </location>
</feature>
<feature type="repeat" description="WD 3">
    <location>
        <begin position="295"/>
        <end position="335"/>
    </location>
</feature>
<feature type="repeat" description="WD 4">
    <location>
        <begin position="337"/>
        <end position="377"/>
    </location>
</feature>
<feature type="repeat" description="WD 5">
    <location>
        <begin position="381"/>
        <end position="421"/>
    </location>
</feature>
<feature type="repeat" description="WD 6">
    <location>
        <begin position="426"/>
        <end position="468"/>
    </location>
</feature>
<feature type="region of interest" description="Disordered" evidence="1">
    <location>
        <begin position="46"/>
        <end position="74"/>
    </location>
</feature>
<feature type="region of interest" description="Disordered" evidence="1">
    <location>
        <begin position="482"/>
        <end position="516"/>
    </location>
</feature>
<feature type="compositionally biased region" description="Polar residues" evidence="1">
    <location>
        <begin position="47"/>
        <end position="62"/>
    </location>
</feature>
<feature type="compositionally biased region" description="Basic and acidic residues" evidence="1">
    <location>
        <begin position="482"/>
        <end position="493"/>
    </location>
</feature>
<feature type="compositionally biased region" description="Acidic residues" evidence="1">
    <location>
        <begin position="495"/>
        <end position="516"/>
    </location>
</feature>
<feature type="modified residue" description="Phosphoserine" evidence="3">
    <location>
        <position position="21"/>
    </location>
</feature>
<feature type="modified residue" description="Phosphoserine" evidence="3">
    <location>
        <position position="496"/>
    </location>
</feature>
<feature type="modified residue" description="Phosphoserine" evidence="3">
    <location>
        <position position="497"/>
    </location>
</feature>
<comment type="subcellular location">
    <subcellularLocation>
        <location evidence="2">Cytoplasm</location>
    </subcellularLocation>
    <subcellularLocation>
        <location evidence="2">Nucleus</location>
        <location evidence="2">Nucleolus</location>
    </subcellularLocation>
</comment>
<organism>
    <name type="scientific">Schizosaccharomyces pombe (strain 972 / ATCC 24843)</name>
    <name type="common">Fission yeast</name>
    <dbReference type="NCBI Taxonomy" id="284812"/>
    <lineage>
        <taxon>Eukaryota</taxon>
        <taxon>Fungi</taxon>
        <taxon>Dikarya</taxon>
        <taxon>Ascomycota</taxon>
        <taxon>Taphrinomycotina</taxon>
        <taxon>Schizosaccharomycetes</taxon>
        <taxon>Schizosaccharomycetales</taxon>
        <taxon>Schizosaccharomycetaceae</taxon>
        <taxon>Schizosaccharomyces</taxon>
    </lineage>
</organism>
<proteinExistence type="evidence at protein level"/>
<reference key="1">
    <citation type="journal article" date="2002" name="Nature">
        <title>The genome sequence of Schizosaccharomyces pombe.</title>
        <authorList>
            <person name="Wood V."/>
            <person name="Gwilliam R."/>
            <person name="Rajandream M.A."/>
            <person name="Lyne M.H."/>
            <person name="Lyne R."/>
            <person name="Stewart A."/>
            <person name="Sgouros J.G."/>
            <person name="Peat N."/>
            <person name="Hayles J."/>
            <person name="Baker S.G."/>
            <person name="Basham D."/>
            <person name="Bowman S."/>
            <person name="Brooks K."/>
            <person name="Brown D."/>
            <person name="Brown S."/>
            <person name="Chillingworth T."/>
            <person name="Churcher C.M."/>
            <person name="Collins M."/>
            <person name="Connor R."/>
            <person name="Cronin A."/>
            <person name="Davis P."/>
            <person name="Feltwell T."/>
            <person name="Fraser A."/>
            <person name="Gentles S."/>
            <person name="Goble A."/>
            <person name="Hamlin N."/>
            <person name="Harris D.E."/>
            <person name="Hidalgo J."/>
            <person name="Hodgson G."/>
            <person name="Holroyd S."/>
            <person name="Hornsby T."/>
            <person name="Howarth S."/>
            <person name="Huckle E.J."/>
            <person name="Hunt S."/>
            <person name="Jagels K."/>
            <person name="James K.D."/>
            <person name="Jones L."/>
            <person name="Jones M."/>
            <person name="Leather S."/>
            <person name="McDonald S."/>
            <person name="McLean J."/>
            <person name="Mooney P."/>
            <person name="Moule S."/>
            <person name="Mungall K.L."/>
            <person name="Murphy L.D."/>
            <person name="Niblett D."/>
            <person name="Odell C."/>
            <person name="Oliver K."/>
            <person name="O'Neil S."/>
            <person name="Pearson D."/>
            <person name="Quail M.A."/>
            <person name="Rabbinowitsch E."/>
            <person name="Rutherford K.M."/>
            <person name="Rutter S."/>
            <person name="Saunders D."/>
            <person name="Seeger K."/>
            <person name="Sharp S."/>
            <person name="Skelton J."/>
            <person name="Simmonds M.N."/>
            <person name="Squares R."/>
            <person name="Squares S."/>
            <person name="Stevens K."/>
            <person name="Taylor K."/>
            <person name="Taylor R.G."/>
            <person name="Tivey A."/>
            <person name="Walsh S.V."/>
            <person name="Warren T."/>
            <person name="Whitehead S."/>
            <person name="Woodward J.R."/>
            <person name="Volckaert G."/>
            <person name="Aert R."/>
            <person name="Robben J."/>
            <person name="Grymonprez B."/>
            <person name="Weltjens I."/>
            <person name="Vanstreels E."/>
            <person name="Rieger M."/>
            <person name="Schaefer M."/>
            <person name="Mueller-Auer S."/>
            <person name="Gabel C."/>
            <person name="Fuchs M."/>
            <person name="Duesterhoeft A."/>
            <person name="Fritzc C."/>
            <person name="Holzer E."/>
            <person name="Moestl D."/>
            <person name="Hilbert H."/>
            <person name="Borzym K."/>
            <person name="Langer I."/>
            <person name="Beck A."/>
            <person name="Lehrach H."/>
            <person name="Reinhardt R."/>
            <person name="Pohl T.M."/>
            <person name="Eger P."/>
            <person name="Zimmermann W."/>
            <person name="Wedler H."/>
            <person name="Wambutt R."/>
            <person name="Purnelle B."/>
            <person name="Goffeau A."/>
            <person name="Cadieu E."/>
            <person name="Dreano S."/>
            <person name="Gloux S."/>
            <person name="Lelaure V."/>
            <person name="Mottier S."/>
            <person name="Galibert F."/>
            <person name="Aves S.J."/>
            <person name="Xiang Z."/>
            <person name="Hunt C."/>
            <person name="Moore K."/>
            <person name="Hurst S.M."/>
            <person name="Lucas M."/>
            <person name="Rochet M."/>
            <person name="Gaillardin C."/>
            <person name="Tallada V.A."/>
            <person name="Garzon A."/>
            <person name="Thode G."/>
            <person name="Daga R.R."/>
            <person name="Cruzado L."/>
            <person name="Jimenez J."/>
            <person name="Sanchez M."/>
            <person name="del Rey F."/>
            <person name="Benito J."/>
            <person name="Dominguez A."/>
            <person name="Revuelta J.L."/>
            <person name="Moreno S."/>
            <person name="Armstrong J."/>
            <person name="Forsburg S.L."/>
            <person name="Cerutti L."/>
            <person name="Lowe T."/>
            <person name="McCombie W.R."/>
            <person name="Paulsen I."/>
            <person name="Potashkin J."/>
            <person name="Shpakovski G.V."/>
            <person name="Ussery D."/>
            <person name="Barrell B.G."/>
            <person name="Nurse P."/>
        </authorList>
    </citation>
    <scope>NUCLEOTIDE SEQUENCE [LARGE SCALE GENOMIC DNA]</scope>
    <source>
        <strain>972 / ATCC 24843</strain>
    </source>
</reference>
<reference key="2">
    <citation type="journal article" date="2006" name="Nat. Biotechnol.">
        <title>ORFeome cloning and global analysis of protein localization in the fission yeast Schizosaccharomyces pombe.</title>
        <authorList>
            <person name="Matsuyama A."/>
            <person name="Arai R."/>
            <person name="Yashiroda Y."/>
            <person name="Shirai A."/>
            <person name="Kamata A."/>
            <person name="Sekido S."/>
            <person name="Kobayashi Y."/>
            <person name="Hashimoto A."/>
            <person name="Hamamoto M."/>
            <person name="Hiraoka Y."/>
            <person name="Horinouchi S."/>
            <person name="Yoshida M."/>
        </authorList>
    </citation>
    <scope>SUBCELLULAR LOCATION [LARGE SCALE ANALYSIS]</scope>
</reference>
<reference key="3">
    <citation type="journal article" date="2008" name="J. Proteome Res.">
        <title>Phosphoproteome analysis of fission yeast.</title>
        <authorList>
            <person name="Wilson-Grady J.T."/>
            <person name="Villen J."/>
            <person name="Gygi S.P."/>
        </authorList>
    </citation>
    <scope>PHOSPHORYLATION [LARGE SCALE ANALYSIS] AT SER-21; SER-496 AND SER-497</scope>
    <scope>IDENTIFICATION BY MASS SPECTROMETRY</scope>
</reference>
<sequence>MSIVSSVAFVPRGYASEFPKSYDIDEIEYERINQLSKLKLEDARADLQSSMEDSNKANGNGEETTDGAEGVLQTSEEVDDELKVYNLDTYDDDEEEAETEGPAAMFSNIRGLAYHENGEKDPYITIDPQEQDDLEREEMQILPTDSLLLAARTEDNLSHVEVYVYEPTEENLYVHHDFLLPTFPLCLEWLDYKVGTSDNAPGNYVAVGTFDPEIEIWDLDIIDAVYPAAVLGAGASQVNKKKKKSKKINDSYHTDAVLALSSNRNAHNLLVSGSADTTLKLWDLSTCNCVKSFTYHSDKVSCLDWYSKAPSVLLSGSYDKTAKIADLRLEEAPSSFQVTSDVENVAWDQHSENNFFIGTDNGIVYYCDARNLSKSVWQLQAHDGPISCLSVNPSVPSFVATGSTDRVVKLWNTSDSSPKMVVSRDLDVGRVFTCSFTTDESTAFHLAASGSKGVVRVWDTATNPGVRKAFESRVTEEVTKKERIVQLEDRGAGEDSSDDDDYEDIEDDDDQDAEMS</sequence>
<name>YBEG_SCHPO</name>
<keyword id="KW-0963">Cytoplasm</keyword>
<keyword id="KW-0539">Nucleus</keyword>
<keyword id="KW-0597">Phosphoprotein</keyword>
<keyword id="KW-1185">Reference proteome</keyword>
<keyword id="KW-0677">Repeat</keyword>
<keyword id="KW-0853">WD repeat</keyword>
<protein>
    <recommendedName>
        <fullName>Uncharacterized WD repeat-containing protein C17D11.16</fullName>
    </recommendedName>
</protein>
<accession>Q9P775</accession>